<keyword id="KW-1015">Disulfide bond</keyword>
<keyword id="KW-0430">Lectin</keyword>
<keyword id="KW-1185">Reference proteome</keyword>
<keyword id="KW-0964">Secreted</keyword>
<keyword id="KW-0732">Signal</keyword>
<accession>Q92778</accession>
<accession>P70109</accession>
<accession>Q9QYF7</accession>
<name>PBCG_MESAU</name>
<sequence length="175" mass="19940">MMLPMTLCRMSWMLLSCLMFLSWVEGEESQKKLPSSRITCPQGSVAYGSYCYSLILIPQTWSNAELSCQMHFSGHLAFLLSTGEITFVSSLVKNSLTAYQYIWIGLHDPSHGTLPNGSGWKWSSSNVLTFYNWERNPSIAADRGYCAVLSQKSGFQKWRDFNCENELPYICKFKV</sequence>
<dbReference type="EMBL" id="U41737">
    <property type="protein sequence ID" value="AAB86497.1"/>
    <property type="status" value="ALT_INIT"/>
    <property type="molecule type" value="mRNA"/>
</dbReference>
<dbReference type="EMBL" id="U41738">
    <property type="protein sequence ID" value="AAB16754.1"/>
    <property type="status" value="ALT_INIT"/>
    <property type="molecule type" value="mRNA"/>
</dbReference>
<dbReference type="EMBL" id="AY184211">
    <property type="protein sequence ID" value="AAO63559.1"/>
    <property type="molecule type" value="Genomic_DNA"/>
</dbReference>
<dbReference type="EMBL" id="AB035211">
    <property type="protein sequence ID" value="BAA88566.1"/>
    <property type="molecule type" value="Genomic_DNA"/>
</dbReference>
<dbReference type="RefSeq" id="NP_001268484.1">
    <property type="nucleotide sequence ID" value="NM_001281555.1"/>
</dbReference>
<dbReference type="SMR" id="Q92778"/>
<dbReference type="STRING" id="10036.ENSMAUP00000001858"/>
<dbReference type="Ensembl" id="ENSMAUT00000001902">
    <property type="protein sequence ID" value="ENSMAUP00000001858"/>
    <property type="gene ID" value="ENSMAUG00000001387"/>
</dbReference>
<dbReference type="GeneID" id="101829186"/>
<dbReference type="KEGG" id="maua:101829186"/>
<dbReference type="eggNOG" id="KOG4297">
    <property type="taxonomic scope" value="Eukaryota"/>
</dbReference>
<dbReference type="OrthoDB" id="9566065at2759"/>
<dbReference type="Proteomes" id="UP000189706">
    <property type="component" value="Unplaced"/>
</dbReference>
<dbReference type="GO" id="GO:0005576">
    <property type="term" value="C:extracellular region"/>
    <property type="evidence" value="ECO:0007669"/>
    <property type="project" value="UniProtKB-SubCell"/>
</dbReference>
<dbReference type="GO" id="GO:0030246">
    <property type="term" value="F:carbohydrate binding"/>
    <property type="evidence" value="ECO:0007669"/>
    <property type="project" value="UniProtKB-KW"/>
</dbReference>
<dbReference type="CDD" id="cd03594">
    <property type="entry name" value="CLECT_REG-1_like"/>
    <property type="match status" value="1"/>
</dbReference>
<dbReference type="FunFam" id="3.10.100.10:FF:000015">
    <property type="entry name" value="C-type lectin Cal"/>
    <property type="match status" value="1"/>
</dbReference>
<dbReference type="Gene3D" id="3.10.100.10">
    <property type="entry name" value="Mannose-Binding Protein A, subunit A"/>
    <property type="match status" value="1"/>
</dbReference>
<dbReference type="InterPro" id="IPR001304">
    <property type="entry name" value="C-type_lectin-like"/>
</dbReference>
<dbReference type="InterPro" id="IPR016186">
    <property type="entry name" value="C-type_lectin-like/link_sf"/>
</dbReference>
<dbReference type="InterPro" id="IPR050111">
    <property type="entry name" value="C-type_lectin/snaclec_domain"/>
</dbReference>
<dbReference type="InterPro" id="IPR018378">
    <property type="entry name" value="C-type_lectin_CS"/>
</dbReference>
<dbReference type="InterPro" id="IPR016187">
    <property type="entry name" value="CTDL_fold"/>
</dbReference>
<dbReference type="PANTHER" id="PTHR22803">
    <property type="entry name" value="MANNOSE, PHOSPHOLIPASE, LECTIN RECEPTOR RELATED"/>
    <property type="match status" value="1"/>
</dbReference>
<dbReference type="Pfam" id="PF00059">
    <property type="entry name" value="Lectin_C"/>
    <property type="match status" value="1"/>
</dbReference>
<dbReference type="PRINTS" id="PR01504">
    <property type="entry name" value="PNCREATITSAP"/>
</dbReference>
<dbReference type="SMART" id="SM00034">
    <property type="entry name" value="CLECT"/>
    <property type="match status" value="1"/>
</dbReference>
<dbReference type="SUPFAM" id="SSF56436">
    <property type="entry name" value="C-type lectin-like"/>
    <property type="match status" value="1"/>
</dbReference>
<dbReference type="PROSITE" id="PS00615">
    <property type="entry name" value="C_TYPE_LECTIN_1"/>
    <property type="match status" value="1"/>
</dbReference>
<dbReference type="PROSITE" id="PS50041">
    <property type="entry name" value="C_TYPE_LECTIN_2"/>
    <property type="match status" value="1"/>
</dbReference>
<reference key="1">
    <citation type="journal article" date="1997" name="J. Clin. Invest.">
        <title>Cloning and sequencing of the pancreatic islet neogenesis associated protein (INGAP) gene and its expression in islet neogenesis in hamsters.</title>
        <authorList>
            <person name="Rafaeloff R."/>
            <person name="Pittenger G.L."/>
            <person name="Barlow S.W."/>
            <person name="Qin X.F."/>
            <person name="Yan B."/>
            <person name="Rosenberg L."/>
            <person name="Duguid W.P."/>
            <person name="Vinik A.I."/>
        </authorList>
    </citation>
    <scope>NUCLEOTIDE SEQUENCE [MRNA]</scope>
    <scope>FUNCTION</scope>
    <scope>TISSUE SPECIFICITY</scope>
    <scope>INDUCTION</scope>
    <scope>SYNTHESIS OF 104-118</scope>
    <source>
        <strain>Syrian</strain>
        <tissue>Pancreas</tissue>
    </source>
</reference>
<reference key="2">
    <citation type="journal article" date="2003" name="Biochim. Biophys. Acta">
        <title>Cloning genomic INGAP: a Reg-related family member with distinct transcriptional regulation sites.</title>
        <authorList>
            <person name="Taylor-Fishwick D.A."/>
            <person name="Rittman S."/>
            <person name="Kendall H."/>
            <person name="Roy L."/>
            <person name="Shi W."/>
            <person name="Cao Y."/>
            <person name="Pittenger G.L."/>
            <person name="Vinik A.I."/>
        </authorList>
    </citation>
    <scope>NUCLEOTIDE SEQUENCE [GENOMIC DNA]</scope>
    <source>
        <strain>Syrian</strain>
        <tissue>Liver</tissue>
    </source>
</reference>
<reference key="3">
    <citation type="journal article" date="2000" name="Gene">
        <title>Identification of a novel Reg family gene, Reg III delta, and mapping of all three types of Reg family gene in a 75 kilobase mouse genomic region.</title>
        <authorList>
            <person name="Abe M."/>
            <person name="Nata K."/>
            <person name="Akiyama T."/>
            <person name="Shervani N.J."/>
            <person name="Kobayashi S."/>
            <person name="Tomioka-Kumagai T."/>
            <person name="Ito S."/>
            <person name="Takasawa S."/>
            <person name="Okamoto H."/>
        </authorList>
    </citation>
    <scope>NUCLEOTIDE SEQUENCE OF 38-175</scope>
</reference>
<organism>
    <name type="scientific">Mesocricetus auratus</name>
    <name type="common">Golden hamster</name>
    <dbReference type="NCBI Taxonomy" id="10036"/>
    <lineage>
        <taxon>Eukaryota</taxon>
        <taxon>Metazoa</taxon>
        <taxon>Chordata</taxon>
        <taxon>Craniata</taxon>
        <taxon>Vertebrata</taxon>
        <taxon>Euteleostomi</taxon>
        <taxon>Mammalia</taxon>
        <taxon>Eutheria</taxon>
        <taxon>Euarchontoglires</taxon>
        <taxon>Glires</taxon>
        <taxon>Rodentia</taxon>
        <taxon>Myomorpha</taxon>
        <taxon>Muroidea</taxon>
        <taxon>Cricetidae</taxon>
        <taxon>Cricetinae</taxon>
        <taxon>Mesocricetus</taxon>
    </lineage>
</organism>
<proteinExistence type="evidence at transcript level"/>
<evidence type="ECO:0000250" key="1"/>
<evidence type="ECO:0000255" key="2">
    <source>
        <dbReference type="PROSITE-ProRule" id="PRU00040"/>
    </source>
</evidence>
<evidence type="ECO:0000269" key="3">
    <source>
    </source>
</evidence>
<evidence type="ECO:0000305" key="4"/>
<feature type="signal peptide" evidence="1">
    <location>
        <begin position="1"/>
        <end position="26"/>
    </location>
</feature>
<feature type="chain" id="PRO_0000017453" description="Pancreatic beta cell growth factor">
    <location>
        <begin position="27"/>
        <end position="175"/>
    </location>
</feature>
<feature type="domain" description="C-type lectin" evidence="2">
    <location>
        <begin position="38"/>
        <end position="175"/>
    </location>
</feature>
<feature type="disulfide bond" evidence="2">
    <location>
        <begin position="40"/>
        <end position="51"/>
    </location>
</feature>
<feature type="disulfide bond" evidence="2">
    <location>
        <begin position="68"/>
        <end position="171"/>
    </location>
</feature>
<feature type="disulfide bond" evidence="2">
    <location>
        <begin position="146"/>
        <end position="163"/>
    </location>
</feature>
<gene>
    <name type="primary">INGAP</name>
</gene>
<protein>
    <recommendedName>
        <fullName>Pancreatic beta cell growth factor</fullName>
    </recommendedName>
    <alternativeName>
        <fullName>Islet neogenesis-associated protein</fullName>
    </alternativeName>
</protein>
<comment type="function">
    <text evidence="3">Constituent of ilotropin, which is a partially purified preparation of cellophane wrapping (CW) pancreata. Capable of initiating duct cell proliferation, a prerequisite for islet neogenesis.</text>
</comment>
<comment type="subcellular location">
    <subcellularLocation>
        <location evidence="1">Secreted</location>
    </subcellularLocation>
</comment>
<comment type="tissue specificity">
    <text evidence="3">Expressed only in CW animals pancreas and to a lesser extent in duodenum. In pancreas it is found in acinar cells, but not in islets.</text>
</comment>
<comment type="induction">
    <text evidence="3">Found 1 and 2 days after cellophane wrapping, absent by the 6th day. This period coincides with islet neogenesis.</text>
</comment>
<comment type="caution">
    <text evidence="4">It is uncertain whether Met-1, Met-2 or Met-5 is the initiator.</text>
</comment>
<comment type="sequence caution" evidence="4">
    <conflict type="erroneous initiation">
        <sequence resource="EMBL-CDS" id="AAB16754"/>
    </conflict>
</comment>
<comment type="sequence caution" evidence="4">
    <conflict type="erroneous initiation">
        <sequence resource="EMBL-CDS" id="AAB86497"/>
    </conflict>
</comment>